<evidence type="ECO:0000255" key="1">
    <source>
        <dbReference type="HAMAP-Rule" id="MF_01328"/>
    </source>
</evidence>
<evidence type="ECO:0000305" key="2"/>
<name>RL4_CHLT2</name>
<sequence length="222" mass="24590">MVLLSKFDFSGKELGKFELPDAFFTEGREQSVKDYLVAIQANKRQWSACTRGRSEVSHSTKKPFRQKGTGNARQGCLAAPQFRGGGIVFGPKPKFDQHIRINKKERRAAIRLLLAQKIQTGKLIVAENSVFVSSLDAPKTKEALRFLKECNVECRGVLFVDSLAHVGSNENLRLSVRNLSAVRGFTYGENISGYDIAAARNIVVSEKALELLVESLVSTTKD</sequence>
<gene>
    <name evidence="1" type="primary">rplD</name>
    <name type="ordered locus">CTL0789</name>
</gene>
<keyword id="KW-0687">Ribonucleoprotein</keyword>
<keyword id="KW-0689">Ribosomal protein</keyword>
<keyword id="KW-0694">RNA-binding</keyword>
<keyword id="KW-0699">rRNA-binding</keyword>
<feature type="chain" id="PRO_1000142101" description="Large ribosomal subunit protein uL4">
    <location>
        <begin position="1"/>
        <end position="222"/>
    </location>
</feature>
<dbReference type="EMBL" id="AM884176">
    <property type="protein sequence ID" value="CAP04227.1"/>
    <property type="molecule type" value="Genomic_DNA"/>
</dbReference>
<dbReference type="RefSeq" id="WP_009873875.1">
    <property type="nucleotide sequence ID" value="NC_010287.1"/>
</dbReference>
<dbReference type="RefSeq" id="YP_001654860.1">
    <property type="nucleotide sequence ID" value="NC_010287.1"/>
</dbReference>
<dbReference type="SMR" id="B0B8A1"/>
<dbReference type="KEGG" id="ctb:CTL0789"/>
<dbReference type="PATRIC" id="fig|471472.4.peg.845"/>
<dbReference type="HOGENOM" id="CLU_041575_5_2_0"/>
<dbReference type="Proteomes" id="UP001154402">
    <property type="component" value="Chromosome"/>
</dbReference>
<dbReference type="GO" id="GO:1990904">
    <property type="term" value="C:ribonucleoprotein complex"/>
    <property type="evidence" value="ECO:0007669"/>
    <property type="project" value="UniProtKB-KW"/>
</dbReference>
<dbReference type="GO" id="GO:0005840">
    <property type="term" value="C:ribosome"/>
    <property type="evidence" value="ECO:0007669"/>
    <property type="project" value="UniProtKB-KW"/>
</dbReference>
<dbReference type="GO" id="GO:0019843">
    <property type="term" value="F:rRNA binding"/>
    <property type="evidence" value="ECO:0007669"/>
    <property type="project" value="UniProtKB-UniRule"/>
</dbReference>
<dbReference type="GO" id="GO:0003735">
    <property type="term" value="F:structural constituent of ribosome"/>
    <property type="evidence" value="ECO:0007669"/>
    <property type="project" value="InterPro"/>
</dbReference>
<dbReference type="GO" id="GO:0006412">
    <property type="term" value="P:translation"/>
    <property type="evidence" value="ECO:0007669"/>
    <property type="project" value="UniProtKB-UniRule"/>
</dbReference>
<dbReference type="Gene3D" id="3.40.1370.10">
    <property type="match status" value="1"/>
</dbReference>
<dbReference type="HAMAP" id="MF_01328_B">
    <property type="entry name" value="Ribosomal_uL4_B"/>
    <property type="match status" value="1"/>
</dbReference>
<dbReference type="InterPro" id="IPR002136">
    <property type="entry name" value="Ribosomal_uL4"/>
</dbReference>
<dbReference type="InterPro" id="IPR013005">
    <property type="entry name" value="Ribosomal_uL4-like"/>
</dbReference>
<dbReference type="InterPro" id="IPR023574">
    <property type="entry name" value="Ribosomal_uL4_dom_sf"/>
</dbReference>
<dbReference type="NCBIfam" id="TIGR03953">
    <property type="entry name" value="rplD_bact"/>
    <property type="match status" value="1"/>
</dbReference>
<dbReference type="PANTHER" id="PTHR10746">
    <property type="entry name" value="50S RIBOSOMAL PROTEIN L4"/>
    <property type="match status" value="1"/>
</dbReference>
<dbReference type="PANTHER" id="PTHR10746:SF6">
    <property type="entry name" value="LARGE RIBOSOMAL SUBUNIT PROTEIN UL4M"/>
    <property type="match status" value="1"/>
</dbReference>
<dbReference type="Pfam" id="PF00573">
    <property type="entry name" value="Ribosomal_L4"/>
    <property type="match status" value="1"/>
</dbReference>
<dbReference type="SUPFAM" id="SSF52166">
    <property type="entry name" value="Ribosomal protein L4"/>
    <property type="match status" value="1"/>
</dbReference>
<protein>
    <recommendedName>
        <fullName evidence="1">Large ribosomal subunit protein uL4</fullName>
    </recommendedName>
    <alternativeName>
        <fullName evidence="2">50S ribosomal protein L4</fullName>
    </alternativeName>
</protein>
<proteinExistence type="inferred from homology"/>
<organism>
    <name type="scientific">Chlamydia trachomatis serovar L2 (strain ATCC VR-902B / DSM 19102 / 434/Bu)</name>
    <dbReference type="NCBI Taxonomy" id="471472"/>
    <lineage>
        <taxon>Bacteria</taxon>
        <taxon>Pseudomonadati</taxon>
        <taxon>Chlamydiota</taxon>
        <taxon>Chlamydiia</taxon>
        <taxon>Chlamydiales</taxon>
        <taxon>Chlamydiaceae</taxon>
        <taxon>Chlamydia/Chlamydophila group</taxon>
        <taxon>Chlamydia</taxon>
    </lineage>
</organism>
<comment type="function">
    <text evidence="1">One of the primary rRNA binding proteins, this protein initially binds near the 5'-end of the 23S rRNA. It is important during the early stages of 50S assembly. It makes multiple contacts with different domains of the 23S rRNA in the assembled 50S subunit and ribosome.</text>
</comment>
<comment type="function">
    <text evidence="1">Forms part of the polypeptide exit tunnel.</text>
</comment>
<comment type="subunit">
    <text evidence="1">Part of the 50S ribosomal subunit.</text>
</comment>
<comment type="similarity">
    <text evidence="1">Belongs to the universal ribosomal protein uL4 family.</text>
</comment>
<reference key="1">
    <citation type="journal article" date="2008" name="Genome Res.">
        <title>Chlamydia trachomatis: genome sequence analysis of lymphogranuloma venereum isolates.</title>
        <authorList>
            <person name="Thomson N.R."/>
            <person name="Holden M.T.G."/>
            <person name="Carder C."/>
            <person name="Lennard N."/>
            <person name="Lockey S.J."/>
            <person name="Marsh P."/>
            <person name="Skipp P."/>
            <person name="O'Connor C.D."/>
            <person name="Goodhead I."/>
            <person name="Norbertzcak H."/>
            <person name="Harris B."/>
            <person name="Ormond D."/>
            <person name="Rance R."/>
            <person name="Quail M.A."/>
            <person name="Parkhill J."/>
            <person name="Stephens R.S."/>
            <person name="Clarke I.N."/>
        </authorList>
    </citation>
    <scope>NUCLEOTIDE SEQUENCE [LARGE SCALE GENOMIC DNA]</scope>
    <source>
        <strain>ATCC VR-902B / DSM 19102 / 434/Bu</strain>
    </source>
</reference>
<accession>B0B8A1</accession>